<accession>Q58742</accession>
<comment type="function">
    <text evidence="1">Catalyzes the ATP-dependent conversion of 7-carboxy-7-deazaguanine (CDG) to 7-cyano-7-deazaguanine (preQ(0)).</text>
</comment>
<comment type="catalytic activity">
    <reaction evidence="1">
        <text>7-carboxy-7-deazaguanine + NH4(+) + ATP = 7-cyano-7-deazaguanine + ADP + phosphate + H2O + H(+)</text>
        <dbReference type="Rhea" id="RHEA:27982"/>
        <dbReference type="ChEBI" id="CHEBI:15377"/>
        <dbReference type="ChEBI" id="CHEBI:15378"/>
        <dbReference type="ChEBI" id="CHEBI:28938"/>
        <dbReference type="ChEBI" id="CHEBI:30616"/>
        <dbReference type="ChEBI" id="CHEBI:43474"/>
        <dbReference type="ChEBI" id="CHEBI:45075"/>
        <dbReference type="ChEBI" id="CHEBI:61036"/>
        <dbReference type="ChEBI" id="CHEBI:456216"/>
        <dbReference type="EC" id="6.3.4.20"/>
    </reaction>
</comment>
<comment type="cofactor">
    <cofactor evidence="1">
        <name>Zn(2+)</name>
        <dbReference type="ChEBI" id="CHEBI:29105"/>
    </cofactor>
    <text evidence="1">Binds 1 zinc ion per subunit.</text>
</comment>
<comment type="pathway">
    <text evidence="1">Purine metabolism; 7-cyano-7-deazaguanine biosynthesis.</text>
</comment>
<comment type="similarity">
    <text evidence="1">Belongs to the QueC family.</text>
</comment>
<comment type="sequence caution" evidence="2">
    <conflict type="erroneous initiation">
        <sequence resource="EMBL-CDS" id="AAB99356"/>
    </conflict>
</comment>
<organism>
    <name type="scientific">Methanocaldococcus jannaschii (strain ATCC 43067 / DSM 2661 / JAL-1 / JCM 10045 / NBRC 100440)</name>
    <name type="common">Methanococcus jannaschii</name>
    <dbReference type="NCBI Taxonomy" id="243232"/>
    <lineage>
        <taxon>Archaea</taxon>
        <taxon>Methanobacteriati</taxon>
        <taxon>Methanobacteriota</taxon>
        <taxon>Methanomada group</taxon>
        <taxon>Methanococci</taxon>
        <taxon>Methanococcales</taxon>
        <taxon>Methanocaldococcaceae</taxon>
        <taxon>Methanocaldococcus</taxon>
    </lineage>
</organism>
<proteinExistence type="inferred from homology"/>
<name>QUEC_METJA</name>
<sequence>MKAITVLSGGLDSTVVTLIAKDLGYEVTAITFNYGQRAAKREINSAKKICEILGIEHIVVDLPFVKQFGKSSLITEKEIPTLKMEELDSEKAYETMKAVWVPARNVIMFGIASGFAEALDAEKIFIGINKEEGVTFPDNTIEFVEAFNKVLEYGTLNKVKIEAPLYDKTKEEIVKLGAELEKKLGVEVLKYSYSCYHDNGEDFLHCGKCESCMRRKRAFLMAGVEDKTKYIE</sequence>
<feature type="chain" id="PRO_0000107287" description="7-cyano-7-deazaguanine synthase">
    <location>
        <begin position="1"/>
        <end position="232"/>
    </location>
</feature>
<feature type="binding site" evidence="1">
    <location>
        <begin position="7"/>
        <end position="17"/>
    </location>
    <ligand>
        <name>ATP</name>
        <dbReference type="ChEBI" id="CHEBI:30616"/>
    </ligand>
</feature>
<feature type="binding site" evidence="1">
    <location>
        <position position="195"/>
    </location>
    <ligand>
        <name>Zn(2+)</name>
        <dbReference type="ChEBI" id="CHEBI:29105"/>
    </ligand>
</feature>
<feature type="binding site" evidence="1">
    <location>
        <position position="206"/>
    </location>
    <ligand>
        <name>Zn(2+)</name>
        <dbReference type="ChEBI" id="CHEBI:29105"/>
    </ligand>
</feature>
<feature type="binding site" evidence="1">
    <location>
        <position position="209"/>
    </location>
    <ligand>
        <name>Zn(2+)</name>
        <dbReference type="ChEBI" id="CHEBI:29105"/>
    </ligand>
</feature>
<feature type="binding site" evidence="1">
    <location>
        <position position="212"/>
    </location>
    <ligand>
        <name>Zn(2+)</name>
        <dbReference type="ChEBI" id="CHEBI:29105"/>
    </ligand>
</feature>
<evidence type="ECO:0000255" key="1">
    <source>
        <dbReference type="HAMAP-Rule" id="MF_01633"/>
    </source>
</evidence>
<evidence type="ECO:0000305" key="2"/>
<gene>
    <name evidence="1" type="primary">queC</name>
    <name type="ordered locus">MJ1347</name>
</gene>
<keyword id="KW-0067">ATP-binding</keyword>
<keyword id="KW-0436">Ligase</keyword>
<keyword id="KW-0479">Metal-binding</keyword>
<keyword id="KW-0547">Nucleotide-binding</keyword>
<keyword id="KW-1185">Reference proteome</keyword>
<keyword id="KW-0862">Zinc</keyword>
<reference key="1">
    <citation type="journal article" date="1996" name="Science">
        <title>Complete genome sequence of the methanogenic archaeon, Methanococcus jannaschii.</title>
        <authorList>
            <person name="Bult C.J."/>
            <person name="White O."/>
            <person name="Olsen G.J."/>
            <person name="Zhou L."/>
            <person name="Fleischmann R.D."/>
            <person name="Sutton G.G."/>
            <person name="Blake J.A."/>
            <person name="FitzGerald L.M."/>
            <person name="Clayton R.A."/>
            <person name="Gocayne J.D."/>
            <person name="Kerlavage A.R."/>
            <person name="Dougherty B.A."/>
            <person name="Tomb J.-F."/>
            <person name="Adams M.D."/>
            <person name="Reich C.I."/>
            <person name="Overbeek R."/>
            <person name="Kirkness E.F."/>
            <person name="Weinstock K.G."/>
            <person name="Merrick J.M."/>
            <person name="Glodek A."/>
            <person name="Scott J.L."/>
            <person name="Geoghagen N.S.M."/>
            <person name="Weidman J.F."/>
            <person name="Fuhrmann J.L."/>
            <person name="Nguyen D."/>
            <person name="Utterback T.R."/>
            <person name="Kelley J.M."/>
            <person name="Peterson J.D."/>
            <person name="Sadow P.W."/>
            <person name="Hanna M.C."/>
            <person name="Cotton M.D."/>
            <person name="Roberts K.M."/>
            <person name="Hurst M.A."/>
            <person name="Kaine B.P."/>
            <person name="Borodovsky M."/>
            <person name="Klenk H.-P."/>
            <person name="Fraser C.M."/>
            <person name="Smith H.O."/>
            <person name="Woese C.R."/>
            <person name="Venter J.C."/>
        </authorList>
    </citation>
    <scope>NUCLEOTIDE SEQUENCE [LARGE SCALE GENOMIC DNA]</scope>
    <source>
        <strain>ATCC 43067 / DSM 2661 / JAL-1 / JCM 10045 / NBRC 100440</strain>
    </source>
</reference>
<protein>
    <recommendedName>
        <fullName evidence="1">7-cyano-7-deazaguanine synthase</fullName>
        <ecNumber evidence="1">6.3.4.20</ecNumber>
    </recommendedName>
    <alternativeName>
        <fullName evidence="1">7-cyano-7-carbaguanine synthase</fullName>
    </alternativeName>
    <alternativeName>
        <fullName evidence="1">Archaeosine biosynthesis protein QueC</fullName>
    </alternativeName>
    <alternativeName>
        <fullName evidence="1">PreQ(0) synthase</fullName>
    </alternativeName>
</protein>
<dbReference type="EC" id="6.3.4.20" evidence="1"/>
<dbReference type="EMBL" id="L77117">
    <property type="protein sequence ID" value="AAB99356.1"/>
    <property type="status" value="ALT_INIT"/>
    <property type="molecule type" value="Genomic_DNA"/>
</dbReference>
<dbReference type="PIR" id="B64468">
    <property type="entry name" value="B64468"/>
</dbReference>
<dbReference type="RefSeq" id="WP_064496801.1">
    <property type="nucleotide sequence ID" value="NC_000909.1"/>
</dbReference>
<dbReference type="SMR" id="Q58742"/>
<dbReference type="STRING" id="243232.MJ_1347"/>
<dbReference type="PaxDb" id="243232-MJ_1347"/>
<dbReference type="DNASU" id="1452250"/>
<dbReference type="EnsemblBacteria" id="AAB99356">
    <property type="protein sequence ID" value="AAB99356"/>
    <property type="gene ID" value="MJ_1347"/>
</dbReference>
<dbReference type="GeneID" id="1452250"/>
<dbReference type="KEGG" id="mja:MJ_1347"/>
<dbReference type="eggNOG" id="arCOG00039">
    <property type="taxonomic scope" value="Archaea"/>
</dbReference>
<dbReference type="HOGENOM" id="CLU_081854_1_0_2"/>
<dbReference type="InParanoid" id="Q58742"/>
<dbReference type="OrthoDB" id="6532at2157"/>
<dbReference type="PhylomeDB" id="Q58742"/>
<dbReference type="UniPathway" id="UPA00391"/>
<dbReference type="Proteomes" id="UP000000805">
    <property type="component" value="Chromosome"/>
</dbReference>
<dbReference type="GO" id="GO:0005524">
    <property type="term" value="F:ATP binding"/>
    <property type="evidence" value="ECO:0007669"/>
    <property type="project" value="UniProtKB-UniRule"/>
</dbReference>
<dbReference type="GO" id="GO:0016879">
    <property type="term" value="F:ligase activity, forming carbon-nitrogen bonds"/>
    <property type="evidence" value="ECO:0007669"/>
    <property type="project" value="UniProtKB-UniRule"/>
</dbReference>
<dbReference type="GO" id="GO:0008270">
    <property type="term" value="F:zinc ion binding"/>
    <property type="evidence" value="ECO:0007669"/>
    <property type="project" value="UniProtKB-UniRule"/>
</dbReference>
<dbReference type="CDD" id="cd01995">
    <property type="entry name" value="QueC-like"/>
    <property type="match status" value="1"/>
</dbReference>
<dbReference type="FunFam" id="3.40.50.620:FF:000384">
    <property type="entry name" value="7-cyano-7-deazaguanine synthase"/>
    <property type="match status" value="1"/>
</dbReference>
<dbReference type="Gene3D" id="3.40.50.620">
    <property type="entry name" value="HUPs"/>
    <property type="match status" value="1"/>
</dbReference>
<dbReference type="HAMAP" id="MF_01633">
    <property type="entry name" value="QueC"/>
    <property type="match status" value="1"/>
</dbReference>
<dbReference type="InterPro" id="IPR018317">
    <property type="entry name" value="QueC"/>
</dbReference>
<dbReference type="InterPro" id="IPR014729">
    <property type="entry name" value="Rossmann-like_a/b/a_fold"/>
</dbReference>
<dbReference type="NCBIfam" id="TIGR00364">
    <property type="entry name" value="7-cyano-7-deazaguanine synthase QueC"/>
    <property type="match status" value="1"/>
</dbReference>
<dbReference type="PANTHER" id="PTHR42914">
    <property type="entry name" value="7-CYANO-7-DEAZAGUANINE SYNTHASE"/>
    <property type="match status" value="1"/>
</dbReference>
<dbReference type="PANTHER" id="PTHR42914:SF1">
    <property type="entry name" value="7-CYANO-7-DEAZAGUANINE SYNTHASE"/>
    <property type="match status" value="1"/>
</dbReference>
<dbReference type="Pfam" id="PF06508">
    <property type="entry name" value="QueC"/>
    <property type="match status" value="1"/>
</dbReference>
<dbReference type="PIRSF" id="PIRSF006293">
    <property type="entry name" value="ExsB"/>
    <property type="match status" value="1"/>
</dbReference>
<dbReference type="SUPFAM" id="SSF52402">
    <property type="entry name" value="Adenine nucleotide alpha hydrolases-like"/>
    <property type="match status" value="1"/>
</dbReference>